<dbReference type="EMBL" id="D00320">
    <property type="protein sequence ID" value="BAA00230.1"/>
    <property type="molecule type" value="Genomic_DNA"/>
</dbReference>
<dbReference type="EMBL" id="M17418">
    <property type="protein sequence ID" value="AAA66421.1"/>
    <property type="molecule type" value="Genomic_DNA"/>
</dbReference>
<dbReference type="EMBL" id="AF198100">
    <property type="protein sequence ID" value="AAF44477.1"/>
    <property type="molecule type" value="Genomic_DNA"/>
</dbReference>
<dbReference type="PIR" id="JS0227">
    <property type="entry name" value="WMVZP7"/>
</dbReference>
<dbReference type="RefSeq" id="NP_039096.1">
    <property type="nucleotide sequence ID" value="NC_002188.1"/>
</dbReference>
<dbReference type="GeneID" id="1486681"/>
<dbReference type="KEGG" id="vg:1486681"/>
<dbReference type="Proteomes" id="UP000008597">
    <property type="component" value="Segment"/>
</dbReference>
<dbReference type="GO" id="GO:0030430">
    <property type="term" value="C:host cell cytoplasm"/>
    <property type="evidence" value="ECO:0007669"/>
    <property type="project" value="UniProtKB-SubCell"/>
</dbReference>
<dbReference type="GO" id="GO:0044423">
    <property type="term" value="C:virion component"/>
    <property type="evidence" value="ECO:0007669"/>
    <property type="project" value="UniProtKB-KW"/>
</dbReference>
<dbReference type="InterPro" id="IPR005006">
    <property type="entry name" value="Poxvirus_J1"/>
</dbReference>
<dbReference type="Pfam" id="PF03338">
    <property type="entry name" value="Pox_J1"/>
    <property type="match status" value="1"/>
</dbReference>
<name>J1_FOWPN</name>
<feature type="chain" id="PRO_0000099590" description="Protein J1 homolog">
    <location>
        <begin position="1"/>
        <end position="148"/>
    </location>
</feature>
<organism>
    <name type="scientific">Fowlpox virus (strain NVSL)</name>
    <name type="common">FPV</name>
    <dbReference type="NCBI Taxonomy" id="928301"/>
    <lineage>
        <taxon>Viruses</taxon>
        <taxon>Varidnaviria</taxon>
        <taxon>Bamfordvirae</taxon>
        <taxon>Nucleocytoviricota</taxon>
        <taxon>Pokkesviricetes</taxon>
        <taxon>Chitovirales</taxon>
        <taxon>Poxviridae</taxon>
        <taxon>Chordopoxvirinae</taxon>
        <taxon>Avipoxvirus</taxon>
        <taxon>Fowlpox virus</taxon>
    </lineage>
</organism>
<accession>P15915</accession>
<organismHost>
    <name type="scientific">Vertebrata</name>
    <dbReference type="NCBI Taxonomy" id="7742"/>
</organismHost>
<protein>
    <recommendedName>
        <fullName>Protein J1 homolog</fullName>
    </recommendedName>
    <alternativeName>
        <fullName>Protein FPV133</fullName>
    </alternativeName>
</protein>
<sequence length="148" mass="16953">MAHPHQHLLTLFLTDDNGFYSYLSEKSDDEALEDINTIKKYMDFILSVLIRSKEKLENIGCSYEPMSESFKALIKVKDDGTLVKAFTKPLLNPHSEKIVLDRGYTSDFAISVIRLSSKSSYILPANTKYINPNENMYINNLISLLKRN</sequence>
<evidence type="ECO:0000250" key="1"/>
<evidence type="ECO:0000305" key="2"/>
<keyword id="KW-1035">Host cytoplasm</keyword>
<keyword id="KW-0426">Late protein</keyword>
<keyword id="KW-1185">Reference proteome</keyword>
<keyword id="KW-0946">Virion</keyword>
<comment type="function">
    <text evidence="1">Late protein which is a part of a large complex required for early virion morphogenesis. This complex participates in the formation of virosomes and the incorporation of virosomal contents into nascent immature virions. J1 protein is required for DNA packaging during immature virions (IV) formation (By similarity).</text>
</comment>
<comment type="subunit">
    <text evidence="1">Homodimer. Part of a complex composed of A30, G7, F10 kinase, A15, D2, D3, and J1. Interacts with A45 (By similarity).</text>
</comment>
<comment type="subcellular location">
    <subcellularLocation>
        <location>Virion</location>
    </subcellularLocation>
    <subcellularLocation>
        <location evidence="1">Host cytoplasm</location>
    </subcellularLocation>
    <text evidence="1">Localizes in cytoplasmic virus factories. Probably located in between the core and the virion membrane (By similarity).</text>
</comment>
<comment type="induction">
    <text>Expressed in the late phase of the viral replicative cycle.</text>
</comment>
<comment type="similarity">
    <text evidence="2">Belongs to the chordopoxvirinae J1 family.</text>
</comment>
<proteinExistence type="evidence at transcript level"/>
<gene>
    <name type="ordered locus">FPV133</name>
    <name type="ORF">FP7</name>
</gene>
<reference key="1">
    <citation type="journal article" date="1988" name="J. Gen. Virol.">
        <title>Comparison of a conserved region in fowlpox virus and vaccinia virus genomes and the translocation of the fowlpox virus thymidine kinase gene.</title>
        <authorList>
            <person name="Binns M.M."/>
            <person name="Tomley F.M."/>
            <person name="Campbell J."/>
            <person name="Boursnell M.E.G."/>
        </authorList>
    </citation>
    <scope>NUCLEOTIDE SEQUENCE [GENOMIC DNA]</scope>
    <source>
        <strain>FP-9 / Isolate HP-444</strain>
    </source>
</reference>
<reference key="2">
    <citation type="journal article" date="1987" name="Virology">
        <title>Similar genetic organization between a region of fowlpox virus DNA and the vaccinia virus HindIII J fragment despite divergent location of the thymidine kinase gene.</title>
        <authorList>
            <person name="Drillien R."/>
            <person name="Spehner D."/>
            <person name="Villeval D."/>
            <person name="Lecocq J.-P."/>
        </authorList>
    </citation>
    <scope>NUCLEOTIDE SEQUENCE [GENOMIC DNA]</scope>
    <source>
        <strain>Salisbury</strain>
    </source>
</reference>
<reference key="3">
    <citation type="journal article" date="2000" name="J. Virol.">
        <title>The genome of fowlpox virus.</title>
        <authorList>
            <person name="Afonso C.L."/>
            <person name="Tulman E.R."/>
            <person name="Lu Z."/>
            <person name="Zsak L."/>
            <person name="Kutish G.F."/>
            <person name="Rock D.L."/>
        </authorList>
    </citation>
    <scope>NUCLEOTIDE SEQUENCE [LARGE SCALE GENOMIC DNA]</scope>
</reference>